<accession>Q9KCA8</accession>
<protein>
    <recommendedName>
        <fullName evidence="1">Histidinol-phosphate aminotransferase</fullName>
        <ecNumber evidence="1">2.6.1.9</ecNumber>
    </recommendedName>
    <alternativeName>
        <fullName evidence="1">Imidazole acetol-phosphate transaminase</fullName>
    </alternativeName>
</protein>
<sequence>MKIKPQIIGLPPYKPGKPMEDVKRELGLETVVKLASNENPFGASPKVAEAIQEALHHTAIYPDGYARTLRDKVAHYVGVAPEELIFGNGSDEVIQILCRAFLNEQTNTVMAEPTFSQYKLNAVIEGAELREVPLKDGVHDLDGMLEVIDENTRIVWVCNPNNPTGTYVSAEAFQSFLAKVPEDVLVVSDEAYVEYVTADDYPDTVPMIRTYKNLVVLRTFSKVFGLAALRIGYGVANQALIEKIEPVRPPFNNSTFSQVAAVAALEDEAFVQSSVEKNNEGMEQLTEWCSRMGLDYFPSQTNFLLIHVNRSSDDVFNAMLKKGYIIRSGRALGYPAWIRITIGSKEQNDGCLAALADVLAEELTTQHLS</sequence>
<organism>
    <name type="scientific">Halalkalibacterium halodurans (strain ATCC BAA-125 / DSM 18197 / FERM 7344 / JCM 9153 / C-125)</name>
    <name type="common">Bacillus halodurans</name>
    <dbReference type="NCBI Taxonomy" id="272558"/>
    <lineage>
        <taxon>Bacteria</taxon>
        <taxon>Bacillati</taxon>
        <taxon>Bacillota</taxon>
        <taxon>Bacilli</taxon>
        <taxon>Bacillales</taxon>
        <taxon>Bacillaceae</taxon>
        <taxon>Halalkalibacterium (ex Joshi et al. 2022)</taxon>
    </lineage>
</organism>
<name>HIS8_HALH5</name>
<evidence type="ECO:0000255" key="1">
    <source>
        <dbReference type="HAMAP-Rule" id="MF_01023"/>
    </source>
</evidence>
<feature type="chain" id="PRO_0000153306" description="Histidinol-phosphate aminotransferase">
    <location>
        <begin position="1"/>
        <end position="369"/>
    </location>
</feature>
<feature type="modified residue" description="N6-(pyridoxal phosphate)lysine" evidence="1">
    <location>
        <position position="222"/>
    </location>
</feature>
<proteinExistence type="inferred from homology"/>
<reference key="1">
    <citation type="journal article" date="2000" name="Nucleic Acids Res.">
        <title>Complete genome sequence of the alkaliphilic bacterium Bacillus halodurans and genomic sequence comparison with Bacillus subtilis.</title>
        <authorList>
            <person name="Takami H."/>
            <person name="Nakasone K."/>
            <person name="Takaki Y."/>
            <person name="Maeno G."/>
            <person name="Sasaki R."/>
            <person name="Masui N."/>
            <person name="Fuji F."/>
            <person name="Hirama C."/>
            <person name="Nakamura Y."/>
            <person name="Ogasawara N."/>
            <person name="Kuhara S."/>
            <person name="Horikoshi K."/>
        </authorList>
    </citation>
    <scope>NUCLEOTIDE SEQUENCE [LARGE SCALE GENOMIC DNA]</scope>
    <source>
        <strain>ATCC BAA-125 / DSM 18197 / FERM 7344 / JCM 9153 / C-125</strain>
    </source>
</reference>
<gene>
    <name evidence="1" type="primary">hisC</name>
    <name type="ordered locus">BH1665</name>
</gene>
<comment type="catalytic activity">
    <reaction evidence="1">
        <text>L-histidinol phosphate + 2-oxoglutarate = 3-(imidazol-4-yl)-2-oxopropyl phosphate + L-glutamate</text>
        <dbReference type="Rhea" id="RHEA:23744"/>
        <dbReference type="ChEBI" id="CHEBI:16810"/>
        <dbReference type="ChEBI" id="CHEBI:29985"/>
        <dbReference type="ChEBI" id="CHEBI:57766"/>
        <dbReference type="ChEBI" id="CHEBI:57980"/>
        <dbReference type="EC" id="2.6.1.9"/>
    </reaction>
</comment>
<comment type="cofactor">
    <cofactor evidence="1">
        <name>pyridoxal 5'-phosphate</name>
        <dbReference type="ChEBI" id="CHEBI:597326"/>
    </cofactor>
</comment>
<comment type="pathway">
    <text evidence="1">Amino-acid biosynthesis; L-histidine biosynthesis; L-histidine from 5-phospho-alpha-D-ribose 1-diphosphate: step 7/9.</text>
</comment>
<comment type="subunit">
    <text evidence="1">Homodimer.</text>
</comment>
<comment type="similarity">
    <text evidence="1">Belongs to the class-II pyridoxal-phosphate-dependent aminotransferase family. Histidinol-phosphate aminotransferase subfamily.</text>
</comment>
<keyword id="KW-0028">Amino-acid biosynthesis</keyword>
<keyword id="KW-0032">Aminotransferase</keyword>
<keyword id="KW-0368">Histidine biosynthesis</keyword>
<keyword id="KW-0663">Pyridoxal phosphate</keyword>
<keyword id="KW-1185">Reference proteome</keyword>
<keyword id="KW-0808">Transferase</keyword>
<dbReference type="EC" id="2.6.1.9" evidence="1"/>
<dbReference type="EMBL" id="BA000004">
    <property type="protein sequence ID" value="BAB05384.1"/>
    <property type="molecule type" value="Genomic_DNA"/>
</dbReference>
<dbReference type="PIR" id="A83858">
    <property type="entry name" value="A83858"/>
</dbReference>
<dbReference type="RefSeq" id="WP_010897827.1">
    <property type="nucleotide sequence ID" value="NC_002570.2"/>
</dbReference>
<dbReference type="SMR" id="Q9KCA8"/>
<dbReference type="STRING" id="272558.gene:10727563"/>
<dbReference type="KEGG" id="bha:BH1665"/>
<dbReference type="eggNOG" id="COG0079">
    <property type="taxonomic scope" value="Bacteria"/>
</dbReference>
<dbReference type="HOGENOM" id="CLU_017584_3_3_9"/>
<dbReference type="OrthoDB" id="9813612at2"/>
<dbReference type="UniPathway" id="UPA00031">
    <property type="reaction ID" value="UER00012"/>
</dbReference>
<dbReference type="Proteomes" id="UP000001258">
    <property type="component" value="Chromosome"/>
</dbReference>
<dbReference type="GO" id="GO:0004400">
    <property type="term" value="F:histidinol-phosphate transaminase activity"/>
    <property type="evidence" value="ECO:0007669"/>
    <property type="project" value="UniProtKB-UniRule"/>
</dbReference>
<dbReference type="GO" id="GO:0030170">
    <property type="term" value="F:pyridoxal phosphate binding"/>
    <property type="evidence" value="ECO:0007669"/>
    <property type="project" value="InterPro"/>
</dbReference>
<dbReference type="GO" id="GO:0000105">
    <property type="term" value="P:L-histidine biosynthetic process"/>
    <property type="evidence" value="ECO:0007669"/>
    <property type="project" value="UniProtKB-UniRule"/>
</dbReference>
<dbReference type="CDD" id="cd00609">
    <property type="entry name" value="AAT_like"/>
    <property type="match status" value="1"/>
</dbReference>
<dbReference type="Gene3D" id="3.90.1150.10">
    <property type="entry name" value="Aspartate Aminotransferase, domain 1"/>
    <property type="match status" value="1"/>
</dbReference>
<dbReference type="Gene3D" id="3.40.640.10">
    <property type="entry name" value="Type I PLP-dependent aspartate aminotransferase-like (Major domain)"/>
    <property type="match status" value="1"/>
</dbReference>
<dbReference type="HAMAP" id="MF_01023">
    <property type="entry name" value="HisC_aminotrans_2"/>
    <property type="match status" value="1"/>
</dbReference>
<dbReference type="InterPro" id="IPR004839">
    <property type="entry name" value="Aminotransferase_I/II_large"/>
</dbReference>
<dbReference type="InterPro" id="IPR005861">
    <property type="entry name" value="HisP_aminotrans"/>
</dbReference>
<dbReference type="InterPro" id="IPR050106">
    <property type="entry name" value="HistidinolP_aminotransfase"/>
</dbReference>
<dbReference type="InterPro" id="IPR015424">
    <property type="entry name" value="PyrdxlP-dep_Trfase"/>
</dbReference>
<dbReference type="InterPro" id="IPR015421">
    <property type="entry name" value="PyrdxlP-dep_Trfase_major"/>
</dbReference>
<dbReference type="InterPro" id="IPR015422">
    <property type="entry name" value="PyrdxlP-dep_Trfase_small"/>
</dbReference>
<dbReference type="NCBIfam" id="TIGR01141">
    <property type="entry name" value="hisC"/>
    <property type="match status" value="1"/>
</dbReference>
<dbReference type="PANTHER" id="PTHR43643:SF3">
    <property type="entry name" value="HISTIDINOL-PHOSPHATE AMINOTRANSFERASE"/>
    <property type="match status" value="1"/>
</dbReference>
<dbReference type="PANTHER" id="PTHR43643">
    <property type="entry name" value="HISTIDINOL-PHOSPHATE AMINOTRANSFERASE 2"/>
    <property type="match status" value="1"/>
</dbReference>
<dbReference type="Pfam" id="PF00155">
    <property type="entry name" value="Aminotran_1_2"/>
    <property type="match status" value="1"/>
</dbReference>
<dbReference type="SUPFAM" id="SSF53383">
    <property type="entry name" value="PLP-dependent transferases"/>
    <property type="match status" value="1"/>
</dbReference>